<comment type="function">
    <text evidence="1">Binds 16S rRNA, required for the assembly of 30S particles and may also be responsible for determining the conformation of the 16S rRNA at the A site.</text>
</comment>
<comment type="cofactor">
    <cofactor evidence="1">
        <name>Zn(2+)</name>
        <dbReference type="ChEBI" id="CHEBI:29105"/>
    </cofactor>
    <text evidence="1">Binds 1 zinc ion per subunit.</text>
</comment>
<comment type="subunit">
    <text evidence="1">Part of the 30S ribosomal subunit. Contacts proteins S3 and S10.</text>
</comment>
<comment type="similarity">
    <text evidence="1">Belongs to the universal ribosomal protein uS14 family. Zinc-binding uS14 subfamily.</text>
</comment>
<evidence type="ECO:0000255" key="1">
    <source>
        <dbReference type="HAMAP-Rule" id="MF_01364"/>
    </source>
</evidence>
<evidence type="ECO:0000305" key="2"/>
<dbReference type="EMBL" id="AM285304">
    <property type="protein sequence ID" value="CAK98580.1"/>
    <property type="molecule type" value="Genomic_DNA"/>
</dbReference>
<dbReference type="RefSeq" id="WP_277945487.1">
    <property type="nucleotide sequence ID" value="NZ_CP096807.1"/>
</dbReference>
<dbReference type="SMR" id="Q14PJ9"/>
<dbReference type="STRING" id="2133.SCITRI_00344"/>
<dbReference type="GO" id="GO:0005737">
    <property type="term" value="C:cytoplasm"/>
    <property type="evidence" value="ECO:0007669"/>
    <property type="project" value="UniProtKB-ARBA"/>
</dbReference>
<dbReference type="GO" id="GO:0015935">
    <property type="term" value="C:small ribosomal subunit"/>
    <property type="evidence" value="ECO:0007669"/>
    <property type="project" value="TreeGrafter"/>
</dbReference>
<dbReference type="GO" id="GO:0019843">
    <property type="term" value="F:rRNA binding"/>
    <property type="evidence" value="ECO:0007669"/>
    <property type="project" value="UniProtKB-UniRule"/>
</dbReference>
<dbReference type="GO" id="GO:0003735">
    <property type="term" value="F:structural constituent of ribosome"/>
    <property type="evidence" value="ECO:0007669"/>
    <property type="project" value="InterPro"/>
</dbReference>
<dbReference type="GO" id="GO:0008270">
    <property type="term" value="F:zinc ion binding"/>
    <property type="evidence" value="ECO:0007669"/>
    <property type="project" value="UniProtKB-UniRule"/>
</dbReference>
<dbReference type="GO" id="GO:0006412">
    <property type="term" value="P:translation"/>
    <property type="evidence" value="ECO:0007669"/>
    <property type="project" value="UniProtKB-UniRule"/>
</dbReference>
<dbReference type="FunFam" id="4.10.830.10:FF:000001">
    <property type="entry name" value="30S ribosomal protein S14 type Z"/>
    <property type="match status" value="1"/>
</dbReference>
<dbReference type="Gene3D" id="4.10.830.10">
    <property type="entry name" value="30s Ribosomal Protein S14, Chain N"/>
    <property type="match status" value="1"/>
</dbReference>
<dbReference type="HAMAP" id="MF_01364_B">
    <property type="entry name" value="Ribosomal_uS14_2_B"/>
    <property type="match status" value="1"/>
</dbReference>
<dbReference type="InterPro" id="IPR001209">
    <property type="entry name" value="Ribosomal_uS14"/>
</dbReference>
<dbReference type="InterPro" id="IPR023053">
    <property type="entry name" value="Ribosomal_uS14_bact"/>
</dbReference>
<dbReference type="InterPro" id="IPR018271">
    <property type="entry name" value="Ribosomal_uS14_CS"/>
</dbReference>
<dbReference type="InterPro" id="IPR043140">
    <property type="entry name" value="Ribosomal_uS14_sf"/>
</dbReference>
<dbReference type="NCBIfam" id="NF005974">
    <property type="entry name" value="PRK08061.1"/>
    <property type="match status" value="1"/>
</dbReference>
<dbReference type="PANTHER" id="PTHR19836">
    <property type="entry name" value="30S RIBOSOMAL PROTEIN S14"/>
    <property type="match status" value="1"/>
</dbReference>
<dbReference type="PANTHER" id="PTHR19836:SF19">
    <property type="entry name" value="SMALL RIBOSOMAL SUBUNIT PROTEIN US14M"/>
    <property type="match status" value="1"/>
</dbReference>
<dbReference type="Pfam" id="PF00253">
    <property type="entry name" value="Ribosomal_S14"/>
    <property type="match status" value="1"/>
</dbReference>
<dbReference type="SUPFAM" id="SSF57716">
    <property type="entry name" value="Glucocorticoid receptor-like (DNA-binding domain)"/>
    <property type="match status" value="1"/>
</dbReference>
<dbReference type="PROSITE" id="PS00527">
    <property type="entry name" value="RIBOSOMAL_S14"/>
    <property type="match status" value="1"/>
</dbReference>
<keyword id="KW-0479">Metal-binding</keyword>
<keyword id="KW-0687">Ribonucleoprotein</keyword>
<keyword id="KW-0689">Ribosomal protein</keyword>
<keyword id="KW-0694">RNA-binding</keyword>
<keyword id="KW-0699">rRNA-binding</keyword>
<keyword id="KW-0862">Zinc</keyword>
<protein>
    <recommendedName>
        <fullName evidence="1">Small ribosomal subunit protein uS14</fullName>
    </recommendedName>
    <alternativeName>
        <fullName evidence="2">30S ribosomal protein S14 type Z</fullName>
    </alternativeName>
</protein>
<feature type="chain" id="PRO_0000269132" description="Small ribosomal subunit protein uS14">
    <location>
        <begin position="1"/>
        <end position="61"/>
    </location>
</feature>
<feature type="binding site" evidence="1">
    <location>
        <position position="24"/>
    </location>
    <ligand>
        <name>Zn(2+)</name>
        <dbReference type="ChEBI" id="CHEBI:29105"/>
    </ligand>
</feature>
<feature type="binding site" evidence="1">
    <location>
        <position position="27"/>
    </location>
    <ligand>
        <name>Zn(2+)</name>
        <dbReference type="ChEBI" id="CHEBI:29105"/>
    </ligand>
</feature>
<feature type="binding site" evidence="1">
    <location>
        <position position="40"/>
    </location>
    <ligand>
        <name>Zn(2+)</name>
        <dbReference type="ChEBI" id="CHEBI:29105"/>
    </ligand>
</feature>
<feature type="binding site" evidence="1">
    <location>
        <position position="43"/>
    </location>
    <ligand>
        <name>Zn(2+)</name>
        <dbReference type="ChEBI" id="CHEBI:29105"/>
    </ligand>
</feature>
<sequence length="61" mass="6984">MAKKSLKVKQQCHPKFKVRGYTRCGNCGRPHAVLHKFDLCRLCFRNLASKGQIPGVRKASW</sequence>
<gene>
    <name evidence="1" type="primary">rpsZ</name>
    <name evidence="1" type="synonym">rpsN</name>
    <name type="ORF">SPICI03_115</name>
</gene>
<accession>Q14PJ9</accession>
<name>RS14Z_SPICI</name>
<proteinExistence type="inferred from homology"/>
<reference key="1">
    <citation type="submission" date="2006-06" db="EMBL/GenBank/DDBJ databases">
        <title>The partial chromosome sequence of Spiroplasma citri GII3-3X.</title>
        <authorList>
            <person name="Carle P."/>
            <person name="Saillard C."/>
            <person name="Blanchard A."/>
            <person name="Carrere N."/>
            <person name="Carrere S."/>
            <person name="Duret S."/>
            <person name="Eveillard S."/>
            <person name="Gaurivaud P."/>
            <person name="Gourgues G."/>
            <person name="Gouzy J."/>
            <person name="Henry A."/>
            <person name="Salar P."/>
            <person name="Laigret F."/>
            <person name="Bove J.M."/>
            <person name="Renaudin J."/>
            <person name="Foissac X."/>
        </authorList>
    </citation>
    <scope>NUCLEOTIDE SEQUENCE [GENOMIC DNA]</scope>
    <source>
        <strain>GII-3-3X</strain>
    </source>
</reference>
<organism>
    <name type="scientific">Spiroplasma citri</name>
    <dbReference type="NCBI Taxonomy" id="2133"/>
    <lineage>
        <taxon>Bacteria</taxon>
        <taxon>Bacillati</taxon>
        <taxon>Mycoplasmatota</taxon>
        <taxon>Mollicutes</taxon>
        <taxon>Entomoplasmatales</taxon>
        <taxon>Spiroplasmataceae</taxon>
        <taxon>Spiroplasma</taxon>
    </lineage>
</organism>